<protein>
    <recommendedName>
        <fullName evidence="4">Galactooligosaccharides transport system permease protein GanQ</fullName>
    </recommendedName>
</protein>
<feature type="chain" id="PRO_0000382425" description="Galactooligosaccharides transport system permease protein GanQ">
    <location>
        <begin position="1"/>
        <end position="283"/>
    </location>
</feature>
<feature type="transmembrane region" description="Helical" evidence="1">
    <location>
        <begin position="13"/>
        <end position="33"/>
    </location>
</feature>
<feature type="transmembrane region" description="Helical" evidence="1">
    <location>
        <begin position="82"/>
        <end position="102"/>
    </location>
</feature>
<feature type="transmembrane region" description="Helical" evidence="1">
    <location>
        <begin position="115"/>
        <end position="135"/>
    </location>
</feature>
<feature type="transmembrane region" description="Helical" evidence="1">
    <location>
        <begin position="137"/>
        <end position="157"/>
    </location>
</feature>
<feature type="transmembrane region" description="Helical" evidence="1">
    <location>
        <begin position="188"/>
        <end position="208"/>
    </location>
</feature>
<feature type="transmembrane region" description="Helical" evidence="1">
    <location>
        <begin position="248"/>
        <end position="268"/>
    </location>
</feature>
<feature type="domain" description="ABC transmembrane type-1" evidence="1">
    <location>
        <begin position="76"/>
        <end position="268"/>
    </location>
</feature>
<gene>
    <name type="primary">ganQ</name>
    <name type="synonym">yvfM</name>
    <name type="ordered locus">BSU34140</name>
</gene>
<proteinExistence type="evidence at protein level"/>
<sequence length="283" mass="31305">MLADMKVRRYIRLLFSYLLLAFMAVIIVYPLLWTAGASFNPGNSLISTSIIPKHPTFDHYKELFAGKESLQYVQWYVNSMKISLFTMAGSLLCVTFTAYAFSRFRFKGRKYALTLFLLLQMIPQFSALIALFVLAQILGMINSHWLLILLYIGGLIPMNTYLMKGYMDSIPMDLDESAKIDGASSTRIFFQIILPLSKPMAAVVAMNGFTGPLGDFVLSSTILRTPESYTLPVGLFNLVNDVMGASYTTFAAGALLISIPVAVIFIMLQKNFVSGLTAGGTKG</sequence>
<name>GANQ_BACSU</name>
<accession>O07011</accession>
<accession>Q795J8</accession>
<comment type="function">
    <text evidence="2 3 4 5">Involved in galactan degradation (PubMed:27501980). Part of the ABC transporter complex GanPQS involved in the uptake of galactooligosaccharides (PubMed:27501980, PubMed:29240795). Responsible for the translocation of the substrate across the membrane (Probable).</text>
</comment>
<comment type="subunit">
    <text evidence="2 3">The complex is composed of two ATP-binding proteins (MsmX), two transmembrane proteins (GanP and GanQ) and a solute-binding protein (GanS).</text>
</comment>
<comment type="subcellular location">
    <subcellularLocation>
        <location evidence="4">Cell membrane</location>
        <topology evidence="1">Multi-pass membrane protein</topology>
    </subcellularLocation>
</comment>
<comment type="induction">
    <text evidence="2">Repressed by the transcriptional regulator GanR and induced by galactobiose. Also repressed by glucose.</text>
</comment>
<comment type="similarity">
    <text evidence="4">Belongs to the binding-protein-dependent transport system permease family.</text>
</comment>
<keyword id="KW-1003">Cell membrane</keyword>
<keyword id="KW-0472">Membrane</keyword>
<keyword id="KW-1185">Reference proteome</keyword>
<keyword id="KW-0762">Sugar transport</keyword>
<keyword id="KW-0812">Transmembrane</keyword>
<keyword id="KW-1133">Transmembrane helix</keyword>
<keyword id="KW-0813">Transport</keyword>
<evidence type="ECO:0000255" key="1">
    <source>
        <dbReference type="PROSITE-ProRule" id="PRU00441"/>
    </source>
</evidence>
<evidence type="ECO:0000269" key="2">
    <source>
    </source>
</evidence>
<evidence type="ECO:0000269" key="3">
    <source>
    </source>
</evidence>
<evidence type="ECO:0000305" key="4"/>
<evidence type="ECO:0000305" key="5">
    <source>
    </source>
</evidence>
<organism>
    <name type="scientific">Bacillus subtilis (strain 168)</name>
    <dbReference type="NCBI Taxonomy" id="224308"/>
    <lineage>
        <taxon>Bacteria</taxon>
        <taxon>Bacillati</taxon>
        <taxon>Bacillota</taxon>
        <taxon>Bacilli</taxon>
        <taxon>Bacillales</taxon>
        <taxon>Bacillaceae</taxon>
        <taxon>Bacillus</taxon>
    </lineage>
</organism>
<dbReference type="EMBL" id="Z94043">
    <property type="protein sequence ID" value="CAB08007.1"/>
    <property type="molecule type" value="Genomic_DNA"/>
</dbReference>
<dbReference type="EMBL" id="AL009126">
    <property type="protein sequence ID" value="CAB15419.1"/>
    <property type="molecule type" value="Genomic_DNA"/>
</dbReference>
<dbReference type="PIR" id="E70038">
    <property type="entry name" value="E70038"/>
</dbReference>
<dbReference type="RefSeq" id="NP_391294.1">
    <property type="nucleotide sequence ID" value="NC_000964.3"/>
</dbReference>
<dbReference type="RefSeq" id="WP_003228283.1">
    <property type="nucleotide sequence ID" value="NZ_OZ025638.1"/>
</dbReference>
<dbReference type="SMR" id="O07011"/>
<dbReference type="FunCoup" id="O07011">
    <property type="interactions" value="178"/>
</dbReference>
<dbReference type="STRING" id="224308.BSU34140"/>
<dbReference type="TCDB" id="3.A.1.1.2">
    <property type="family name" value="the atp-binding cassette (abc) superfamily"/>
</dbReference>
<dbReference type="PaxDb" id="224308-BSU34140"/>
<dbReference type="EnsemblBacteria" id="CAB15419">
    <property type="protein sequence ID" value="CAB15419"/>
    <property type="gene ID" value="BSU_34140"/>
</dbReference>
<dbReference type="GeneID" id="937991"/>
<dbReference type="KEGG" id="bsu:BSU34140"/>
<dbReference type="PATRIC" id="fig|224308.43.peg.3578"/>
<dbReference type="eggNOG" id="COG3833">
    <property type="taxonomic scope" value="Bacteria"/>
</dbReference>
<dbReference type="InParanoid" id="O07011"/>
<dbReference type="OrthoDB" id="9794684at2"/>
<dbReference type="PhylomeDB" id="O07011"/>
<dbReference type="BioCyc" id="BSUB:BSU34140-MONOMER"/>
<dbReference type="Proteomes" id="UP000001570">
    <property type="component" value="Chromosome"/>
</dbReference>
<dbReference type="GO" id="GO:0005886">
    <property type="term" value="C:plasma membrane"/>
    <property type="evidence" value="ECO:0007669"/>
    <property type="project" value="UniProtKB-SubCell"/>
</dbReference>
<dbReference type="GO" id="GO:0015423">
    <property type="term" value="F:ABC-type maltose transporter activity"/>
    <property type="evidence" value="ECO:0000318"/>
    <property type="project" value="GO_Central"/>
</dbReference>
<dbReference type="GO" id="GO:0042956">
    <property type="term" value="P:maltodextrin transmembrane transport"/>
    <property type="evidence" value="ECO:0000318"/>
    <property type="project" value="GO_Central"/>
</dbReference>
<dbReference type="GO" id="GO:0015768">
    <property type="term" value="P:maltose transport"/>
    <property type="evidence" value="ECO:0000318"/>
    <property type="project" value="GO_Central"/>
</dbReference>
<dbReference type="CDD" id="cd06261">
    <property type="entry name" value="TM_PBP2"/>
    <property type="match status" value="1"/>
</dbReference>
<dbReference type="FunFam" id="1.10.3720.10:FF:000034">
    <property type="entry name" value="Sugar ABC transporter permease"/>
    <property type="match status" value="1"/>
</dbReference>
<dbReference type="Gene3D" id="1.10.3720.10">
    <property type="entry name" value="MetI-like"/>
    <property type="match status" value="1"/>
</dbReference>
<dbReference type="InterPro" id="IPR050901">
    <property type="entry name" value="BP-dep_ABC_trans_perm"/>
</dbReference>
<dbReference type="InterPro" id="IPR000515">
    <property type="entry name" value="MetI-like"/>
</dbReference>
<dbReference type="InterPro" id="IPR035906">
    <property type="entry name" value="MetI-like_sf"/>
</dbReference>
<dbReference type="PANTHER" id="PTHR32243:SF34">
    <property type="entry name" value="GALACTOOLIGOSACCHARIDES TRANSPORT SYSTEM PERMEASE PROTEIN GANQ"/>
    <property type="match status" value="1"/>
</dbReference>
<dbReference type="PANTHER" id="PTHR32243">
    <property type="entry name" value="MALTOSE TRANSPORT SYSTEM PERMEASE-RELATED"/>
    <property type="match status" value="1"/>
</dbReference>
<dbReference type="Pfam" id="PF00528">
    <property type="entry name" value="BPD_transp_1"/>
    <property type="match status" value="1"/>
</dbReference>
<dbReference type="SUPFAM" id="SSF161098">
    <property type="entry name" value="MetI-like"/>
    <property type="match status" value="1"/>
</dbReference>
<dbReference type="PROSITE" id="PS50928">
    <property type="entry name" value="ABC_TM1"/>
    <property type="match status" value="1"/>
</dbReference>
<reference key="1">
    <citation type="submission" date="1997-04" db="EMBL/GenBank/DDBJ databases">
        <authorList>
            <person name="Denizot F."/>
        </authorList>
    </citation>
    <scope>NUCLEOTIDE SEQUENCE [GENOMIC DNA]</scope>
</reference>
<reference key="2">
    <citation type="journal article" date="1997" name="Nature">
        <title>The complete genome sequence of the Gram-positive bacterium Bacillus subtilis.</title>
        <authorList>
            <person name="Kunst F."/>
            <person name="Ogasawara N."/>
            <person name="Moszer I."/>
            <person name="Albertini A.M."/>
            <person name="Alloni G."/>
            <person name="Azevedo V."/>
            <person name="Bertero M.G."/>
            <person name="Bessieres P."/>
            <person name="Bolotin A."/>
            <person name="Borchert S."/>
            <person name="Borriss R."/>
            <person name="Boursier L."/>
            <person name="Brans A."/>
            <person name="Braun M."/>
            <person name="Brignell S.C."/>
            <person name="Bron S."/>
            <person name="Brouillet S."/>
            <person name="Bruschi C.V."/>
            <person name="Caldwell B."/>
            <person name="Capuano V."/>
            <person name="Carter N.M."/>
            <person name="Choi S.-K."/>
            <person name="Codani J.-J."/>
            <person name="Connerton I.F."/>
            <person name="Cummings N.J."/>
            <person name="Daniel R.A."/>
            <person name="Denizot F."/>
            <person name="Devine K.M."/>
            <person name="Duesterhoeft A."/>
            <person name="Ehrlich S.D."/>
            <person name="Emmerson P.T."/>
            <person name="Entian K.-D."/>
            <person name="Errington J."/>
            <person name="Fabret C."/>
            <person name="Ferrari E."/>
            <person name="Foulger D."/>
            <person name="Fritz C."/>
            <person name="Fujita M."/>
            <person name="Fujita Y."/>
            <person name="Fuma S."/>
            <person name="Galizzi A."/>
            <person name="Galleron N."/>
            <person name="Ghim S.-Y."/>
            <person name="Glaser P."/>
            <person name="Goffeau A."/>
            <person name="Golightly E.J."/>
            <person name="Grandi G."/>
            <person name="Guiseppi G."/>
            <person name="Guy B.J."/>
            <person name="Haga K."/>
            <person name="Haiech J."/>
            <person name="Harwood C.R."/>
            <person name="Henaut A."/>
            <person name="Hilbert H."/>
            <person name="Holsappel S."/>
            <person name="Hosono S."/>
            <person name="Hullo M.-F."/>
            <person name="Itaya M."/>
            <person name="Jones L.-M."/>
            <person name="Joris B."/>
            <person name="Karamata D."/>
            <person name="Kasahara Y."/>
            <person name="Klaerr-Blanchard M."/>
            <person name="Klein C."/>
            <person name="Kobayashi Y."/>
            <person name="Koetter P."/>
            <person name="Koningstein G."/>
            <person name="Krogh S."/>
            <person name="Kumano M."/>
            <person name="Kurita K."/>
            <person name="Lapidus A."/>
            <person name="Lardinois S."/>
            <person name="Lauber J."/>
            <person name="Lazarevic V."/>
            <person name="Lee S.-M."/>
            <person name="Levine A."/>
            <person name="Liu H."/>
            <person name="Masuda S."/>
            <person name="Mauel C."/>
            <person name="Medigue C."/>
            <person name="Medina N."/>
            <person name="Mellado R.P."/>
            <person name="Mizuno M."/>
            <person name="Moestl D."/>
            <person name="Nakai S."/>
            <person name="Noback M."/>
            <person name="Noone D."/>
            <person name="O'Reilly M."/>
            <person name="Ogawa K."/>
            <person name="Ogiwara A."/>
            <person name="Oudega B."/>
            <person name="Park S.-H."/>
            <person name="Parro V."/>
            <person name="Pohl T.M."/>
            <person name="Portetelle D."/>
            <person name="Porwollik S."/>
            <person name="Prescott A.M."/>
            <person name="Presecan E."/>
            <person name="Pujic P."/>
            <person name="Purnelle B."/>
            <person name="Rapoport G."/>
            <person name="Rey M."/>
            <person name="Reynolds S."/>
            <person name="Rieger M."/>
            <person name="Rivolta C."/>
            <person name="Rocha E."/>
            <person name="Roche B."/>
            <person name="Rose M."/>
            <person name="Sadaie Y."/>
            <person name="Sato T."/>
            <person name="Scanlan E."/>
            <person name="Schleich S."/>
            <person name="Schroeter R."/>
            <person name="Scoffone F."/>
            <person name="Sekiguchi J."/>
            <person name="Sekowska A."/>
            <person name="Seror S.J."/>
            <person name="Serror P."/>
            <person name="Shin B.-S."/>
            <person name="Soldo B."/>
            <person name="Sorokin A."/>
            <person name="Tacconi E."/>
            <person name="Takagi T."/>
            <person name="Takahashi H."/>
            <person name="Takemaru K."/>
            <person name="Takeuchi M."/>
            <person name="Tamakoshi A."/>
            <person name="Tanaka T."/>
            <person name="Terpstra P."/>
            <person name="Tognoni A."/>
            <person name="Tosato V."/>
            <person name="Uchiyama S."/>
            <person name="Vandenbol M."/>
            <person name="Vannier F."/>
            <person name="Vassarotti A."/>
            <person name="Viari A."/>
            <person name="Wambutt R."/>
            <person name="Wedler E."/>
            <person name="Wedler H."/>
            <person name="Weitzenegger T."/>
            <person name="Winters P."/>
            <person name="Wipat A."/>
            <person name="Yamamoto H."/>
            <person name="Yamane K."/>
            <person name="Yasumoto K."/>
            <person name="Yata K."/>
            <person name="Yoshida K."/>
            <person name="Yoshikawa H.-F."/>
            <person name="Zumstein E."/>
            <person name="Yoshikawa H."/>
            <person name="Danchin A."/>
        </authorList>
    </citation>
    <scope>NUCLEOTIDE SEQUENCE [LARGE SCALE GENOMIC DNA]</scope>
    <source>
        <strain>168</strain>
    </source>
</reference>
<reference key="3">
    <citation type="journal article" date="2006" name="Appl. Environ. Microbiol.">
        <title>Bioinformatic, genetic, and biochemical evidence that some glycoside hydrolase family 42 beta-galactosidases are arabinogalactan type I oligomer hydrolases.</title>
        <authorList>
            <person name="Shipkowski S."/>
            <person name="Brenchley J.E."/>
        </authorList>
    </citation>
    <scope>PUTATIVE FUNCTION</scope>
</reference>
<reference key="4">
    <citation type="journal article" date="2016" name="J. Bacteriol.">
        <title>Role of the ganSPQAB operon in degradation of galactan by Bacillus subtilis.</title>
        <authorList>
            <person name="Watzlawick H."/>
            <person name="Morabbi Heravi K."/>
            <person name="Altenbuchner J."/>
        </authorList>
    </citation>
    <scope>FUNCTION</scope>
    <scope>SUBUNIT</scope>
    <scope>INDUCTION</scope>
</reference>
<reference key="5">
    <citation type="journal article" date="2017" name="PLoS ONE">
        <title>The MsmX ATPase plays a crucial role in pectin mobilization by Bacillus subtilis.</title>
        <authorList>
            <person name="Ferreira M.J."/>
            <person name="Mendes A.L."/>
            <person name="de Sa-Nogueira I."/>
        </authorList>
    </citation>
    <scope>FUNCTION</scope>
    <scope>SUBUNIT</scope>
</reference>